<gene>
    <name evidence="1" type="primary">rpmB</name>
    <name type="ordered locus">EcHS_A3846</name>
</gene>
<protein>
    <recommendedName>
        <fullName evidence="1">Large ribosomal subunit protein bL28</fullName>
    </recommendedName>
    <alternativeName>
        <fullName evidence="2">50S ribosomal protein L28</fullName>
    </alternativeName>
</protein>
<evidence type="ECO:0000255" key="1">
    <source>
        <dbReference type="HAMAP-Rule" id="MF_00373"/>
    </source>
</evidence>
<evidence type="ECO:0000305" key="2"/>
<keyword id="KW-0687">Ribonucleoprotein</keyword>
<keyword id="KW-0689">Ribosomal protein</keyword>
<sequence length="78" mass="9006">MSRVCQVTGKRPVTGNNRSHALNATKRRFLPNLHSHRFWVESEKRFVTLRVSAKGMRVIDKKGIDTVLAELRARGEKY</sequence>
<name>RL28_ECOHS</name>
<proteinExistence type="inferred from homology"/>
<reference key="1">
    <citation type="journal article" date="2008" name="J. Bacteriol.">
        <title>The pangenome structure of Escherichia coli: comparative genomic analysis of E. coli commensal and pathogenic isolates.</title>
        <authorList>
            <person name="Rasko D.A."/>
            <person name="Rosovitz M.J."/>
            <person name="Myers G.S.A."/>
            <person name="Mongodin E.F."/>
            <person name="Fricke W.F."/>
            <person name="Gajer P."/>
            <person name="Crabtree J."/>
            <person name="Sebaihia M."/>
            <person name="Thomson N.R."/>
            <person name="Chaudhuri R."/>
            <person name="Henderson I.R."/>
            <person name="Sperandio V."/>
            <person name="Ravel J."/>
        </authorList>
    </citation>
    <scope>NUCLEOTIDE SEQUENCE [LARGE SCALE GENOMIC DNA]</scope>
    <source>
        <strain>HS</strain>
    </source>
</reference>
<organism>
    <name type="scientific">Escherichia coli O9:H4 (strain HS)</name>
    <dbReference type="NCBI Taxonomy" id="331112"/>
    <lineage>
        <taxon>Bacteria</taxon>
        <taxon>Pseudomonadati</taxon>
        <taxon>Pseudomonadota</taxon>
        <taxon>Gammaproteobacteria</taxon>
        <taxon>Enterobacterales</taxon>
        <taxon>Enterobacteriaceae</taxon>
        <taxon>Escherichia</taxon>
    </lineage>
</organism>
<feature type="chain" id="PRO_1000059950" description="Large ribosomal subunit protein bL28">
    <location>
        <begin position="1"/>
        <end position="78"/>
    </location>
</feature>
<dbReference type="EMBL" id="CP000802">
    <property type="protein sequence ID" value="ABV08053.1"/>
    <property type="molecule type" value="Genomic_DNA"/>
</dbReference>
<dbReference type="RefSeq" id="WP_000091955.1">
    <property type="nucleotide sequence ID" value="NC_009800.1"/>
</dbReference>
<dbReference type="SMR" id="A8A699"/>
<dbReference type="GeneID" id="93778350"/>
<dbReference type="KEGG" id="ecx:EcHS_A3846"/>
<dbReference type="HOGENOM" id="CLU_064548_3_1_6"/>
<dbReference type="GO" id="GO:0022625">
    <property type="term" value="C:cytosolic large ribosomal subunit"/>
    <property type="evidence" value="ECO:0007669"/>
    <property type="project" value="TreeGrafter"/>
</dbReference>
<dbReference type="GO" id="GO:0003735">
    <property type="term" value="F:structural constituent of ribosome"/>
    <property type="evidence" value="ECO:0007669"/>
    <property type="project" value="InterPro"/>
</dbReference>
<dbReference type="GO" id="GO:0006412">
    <property type="term" value="P:translation"/>
    <property type="evidence" value="ECO:0007669"/>
    <property type="project" value="UniProtKB-UniRule"/>
</dbReference>
<dbReference type="FunFam" id="2.30.170.40:FF:000001">
    <property type="entry name" value="50S ribosomal protein L28"/>
    <property type="match status" value="1"/>
</dbReference>
<dbReference type="Gene3D" id="2.30.170.40">
    <property type="entry name" value="Ribosomal protein L28/L24"/>
    <property type="match status" value="1"/>
</dbReference>
<dbReference type="HAMAP" id="MF_00373">
    <property type="entry name" value="Ribosomal_bL28"/>
    <property type="match status" value="1"/>
</dbReference>
<dbReference type="InterPro" id="IPR026569">
    <property type="entry name" value="Ribosomal_bL28"/>
</dbReference>
<dbReference type="InterPro" id="IPR034704">
    <property type="entry name" value="Ribosomal_bL28/bL31-like_sf"/>
</dbReference>
<dbReference type="InterPro" id="IPR001383">
    <property type="entry name" value="Ribosomal_bL28_bact-type"/>
</dbReference>
<dbReference type="InterPro" id="IPR037147">
    <property type="entry name" value="Ribosomal_bL28_sf"/>
</dbReference>
<dbReference type="NCBIfam" id="TIGR00009">
    <property type="entry name" value="L28"/>
    <property type="match status" value="1"/>
</dbReference>
<dbReference type="PANTHER" id="PTHR13528">
    <property type="entry name" value="39S RIBOSOMAL PROTEIN L28, MITOCHONDRIAL"/>
    <property type="match status" value="1"/>
</dbReference>
<dbReference type="PANTHER" id="PTHR13528:SF2">
    <property type="entry name" value="LARGE RIBOSOMAL SUBUNIT PROTEIN BL28M"/>
    <property type="match status" value="1"/>
</dbReference>
<dbReference type="Pfam" id="PF00830">
    <property type="entry name" value="Ribosomal_L28"/>
    <property type="match status" value="1"/>
</dbReference>
<dbReference type="SUPFAM" id="SSF143800">
    <property type="entry name" value="L28p-like"/>
    <property type="match status" value="1"/>
</dbReference>
<accession>A8A699</accession>
<comment type="similarity">
    <text evidence="1">Belongs to the bacterial ribosomal protein bL28 family.</text>
</comment>